<name>LDHA_CYPCA</name>
<dbReference type="EC" id="1.1.1.27"/>
<dbReference type="EMBL" id="AF076528">
    <property type="protein sequence ID" value="AAD40736.1"/>
    <property type="molecule type" value="mRNA"/>
</dbReference>
<dbReference type="PDB" id="1V6A">
    <property type="method" value="X-ray"/>
    <property type="resolution" value="2.30 A"/>
    <property type="chains" value="A/B=2-333"/>
</dbReference>
<dbReference type="PDBsum" id="1V6A"/>
<dbReference type="SMR" id="Q9W7K5"/>
<dbReference type="Ensembl" id="ENSCCRT00010024567.1">
    <property type="protein sequence ID" value="ENSCCRP00010022476.1"/>
    <property type="gene ID" value="ENSCCRG00010009549.1"/>
</dbReference>
<dbReference type="OrthoDB" id="5405561at2759"/>
<dbReference type="UniPathway" id="UPA00554">
    <property type="reaction ID" value="UER00611"/>
</dbReference>
<dbReference type="EvolutionaryTrace" id="Q9W7K5"/>
<dbReference type="Proteomes" id="UP000694384">
    <property type="component" value="Unplaced"/>
</dbReference>
<dbReference type="Proteomes" id="UP000694427">
    <property type="component" value="Unplaced"/>
</dbReference>
<dbReference type="Proteomes" id="UP000694700">
    <property type="component" value="Unplaced"/>
</dbReference>
<dbReference type="Proteomes" id="UP000694701">
    <property type="component" value="Unplaced"/>
</dbReference>
<dbReference type="Proteomes" id="UP001155660">
    <property type="component" value="Unplaced"/>
</dbReference>
<dbReference type="GO" id="GO:0005737">
    <property type="term" value="C:cytoplasm"/>
    <property type="evidence" value="ECO:0007669"/>
    <property type="project" value="UniProtKB-SubCell"/>
</dbReference>
<dbReference type="GO" id="GO:0004459">
    <property type="term" value="F:L-lactate dehydrogenase activity"/>
    <property type="evidence" value="ECO:0007669"/>
    <property type="project" value="UniProtKB-EC"/>
</dbReference>
<dbReference type="GO" id="GO:0006089">
    <property type="term" value="P:lactate metabolic process"/>
    <property type="evidence" value="ECO:0007669"/>
    <property type="project" value="TreeGrafter"/>
</dbReference>
<dbReference type="CDD" id="cd05293">
    <property type="entry name" value="LDH_1"/>
    <property type="match status" value="1"/>
</dbReference>
<dbReference type="FunFam" id="3.40.50.720:FF:000029">
    <property type="entry name" value="L-lactate dehydrogenase A chain"/>
    <property type="match status" value="1"/>
</dbReference>
<dbReference type="FunFam" id="3.90.110.10:FF:000003">
    <property type="entry name" value="L-lactate dehydrogenase A chain"/>
    <property type="match status" value="1"/>
</dbReference>
<dbReference type="Gene3D" id="3.90.110.10">
    <property type="entry name" value="Lactate dehydrogenase/glycoside hydrolase, family 4, C-terminal"/>
    <property type="match status" value="1"/>
</dbReference>
<dbReference type="Gene3D" id="3.40.50.720">
    <property type="entry name" value="NAD(P)-binding Rossmann-like Domain"/>
    <property type="match status" value="1"/>
</dbReference>
<dbReference type="HAMAP" id="MF_00488">
    <property type="entry name" value="Lactate_dehydrog"/>
    <property type="match status" value="1"/>
</dbReference>
<dbReference type="InterPro" id="IPR001557">
    <property type="entry name" value="L-lactate/malate_DH"/>
</dbReference>
<dbReference type="InterPro" id="IPR011304">
    <property type="entry name" value="L-lactate_DH"/>
</dbReference>
<dbReference type="InterPro" id="IPR018177">
    <property type="entry name" value="L-lactate_DH_AS"/>
</dbReference>
<dbReference type="InterPro" id="IPR022383">
    <property type="entry name" value="Lactate/malate_DH_C"/>
</dbReference>
<dbReference type="InterPro" id="IPR001236">
    <property type="entry name" value="Lactate/malate_DH_N"/>
</dbReference>
<dbReference type="InterPro" id="IPR015955">
    <property type="entry name" value="Lactate_DH/Glyco_Ohase_4_C"/>
</dbReference>
<dbReference type="InterPro" id="IPR036291">
    <property type="entry name" value="NAD(P)-bd_dom_sf"/>
</dbReference>
<dbReference type="NCBIfam" id="TIGR01771">
    <property type="entry name" value="L-LDH-NAD"/>
    <property type="match status" value="1"/>
</dbReference>
<dbReference type="PANTHER" id="PTHR43128">
    <property type="entry name" value="L-2-HYDROXYCARBOXYLATE DEHYDROGENASE (NAD(P)(+))"/>
    <property type="match status" value="1"/>
</dbReference>
<dbReference type="PANTHER" id="PTHR43128:SF10">
    <property type="entry name" value="L-LACTATE DEHYDROGENASE A CHAIN"/>
    <property type="match status" value="1"/>
</dbReference>
<dbReference type="Pfam" id="PF02866">
    <property type="entry name" value="Ldh_1_C"/>
    <property type="match status" value="1"/>
</dbReference>
<dbReference type="Pfam" id="PF00056">
    <property type="entry name" value="Ldh_1_N"/>
    <property type="match status" value="1"/>
</dbReference>
<dbReference type="PIRSF" id="PIRSF000102">
    <property type="entry name" value="Lac_mal_DH"/>
    <property type="match status" value="1"/>
</dbReference>
<dbReference type="PRINTS" id="PR00086">
    <property type="entry name" value="LLDHDRGNASE"/>
</dbReference>
<dbReference type="SUPFAM" id="SSF56327">
    <property type="entry name" value="LDH C-terminal domain-like"/>
    <property type="match status" value="1"/>
</dbReference>
<dbReference type="SUPFAM" id="SSF51735">
    <property type="entry name" value="NAD(P)-binding Rossmann-fold domains"/>
    <property type="match status" value="1"/>
</dbReference>
<dbReference type="PROSITE" id="PS00064">
    <property type="entry name" value="L_LDH"/>
    <property type="match status" value="1"/>
</dbReference>
<feature type="initiator methionine" description="Removed" evidence="1">
    <location>
        <position position="1"/>
    </location>
</feature>
<feature type="chain" id="PRO_0000168434" description="L-lactate dehydrogenase A chain">
    <location>
        <begin position="2"/>
        <end position="333"/>
    </location>
</feature>
<feature type="active site" description="Proton acceptor" evidence="1">
    <location>
        <position position="194"/>
    </location>
</feature>
<feature type="binding site" evidence="1">
    <location>
        <begin position="30"/>
        <end position="58"/>
    </location>
    <ligand>
        <name>NAD(+)</name>
        <dbReference type="ChEBI" id="CHEBI:57540"/>
    </ligand>
</feature>
<feature type="binding site" evidence="1">
    <location>
        <position position="100"/>
    </location>
    <ligand>
        <name>NAD(+)</name>
        <dbReference type="ChEBI" id="CHEBI:57540"/>
    </ligand>
</feature>
<feature type="binding site" evidence="1">
    <location>
        <position position="107"/>
    </location>
    <ligand>
        <name>substrate</name>
    </ligand>
</feature>
<feature type="binding site" evidence="1">
    <location>
        <position position="139"/>
    </location>
    <ligand>
        <name>NAD(+)</name>
        <dbReference type="ChEBI" id="CHEBI:57540"/>
    </ligand>
</feature>
<feature type="binding site" evidence="1">
    <location>
        <position position="139"/>
    </location>
    <ligand>
        <name>substrate</name>
    </ligand>
</feature>
<feature type="binding site" evidence="1">
    <location>
        <position position="170"/>
    </location>
    <ligand>
        <name>substrate</name>
    </ligand>
</feature>
<feature type="binding site" evidence="1">
    <location>
        <position position="249"/>
    </location>
    <ligand>
        <name>substrate</name>
    </ligand>
</feature>
<feature type="helix" evidence="3">
    <location>
        <begin position="4"/>
        <end position="8"/>
    </location>
</feature>
<feature type="strand" evidence="3">
    <location>
        <begin position="24"/>
        <end position="27"/>
    </location>
</feature>
<feature type="helix" evidence="3">
    <location>
        <begin position="31"/>
        <end position="42"/>
    </location>
</feature>
<feature type="strand" evidence="3">
    <location>
        <begin position="47"/>
        <end position="52"/>
    </location>
</feature>
<feature type="helix" evidence="3">
    <location>
        <begin position="56"/>
        <end position="67"/>
    </location>
</feature>
<feature type="helix" evidence="3">
    <location>
        <begin position="68"/>
        <end position="72"/>
    </location>
</feature>
<feature type="strand" evidence="3">
    <location>
        <begin position="76"/>
        <end position="80"/>
    </location>
</feature>
<feature type="helix" evidence="3">
    <location>
        <begin position="84"/>
        <end position="87"/>
    </location>
</feature>
<feature type="strand" evidence="3">
    <location>
        <begin position="91"/>
        <end position="95"/>
    </location>
</feature>
<feature type="helix" evidence="3">
    <location>
        <begin position="107"/>
        <end position="128"/>
    </location>
</feature>
<feature type="strand" evidence="3">
    <location>
        <begin position="133"/>
        <end position="136"/>
    </location>
</feature>
<feature type="strand" evidence="3">
    <location>
        <begin position="138"/>
        <end position="140"/>
    </location>
</feature>
<feature type="helix" evidence="3">
    <location>
        <begin position="141"/>
        <end position="152"/>
    </location>
</feature>
<feature type="helix" evidence="3">
    <location>
        <begin position="156"/>
        <end position="158"/>
    </location>
</feature>
<feature type="strand" evidence="3">
    <location>
        <begin position="159"/>
        <end position="161"/>
    </location>
</feature>
<feature type="helix" evidence="3">
    <location>
        <begin position="165"/>
        <end position="179"/>
    </location>
</feature>
<feature type="helix" evidence="3">
    <location>
        <begin position="183"/>
        <end position="185"/>
    </location>
</feature>
<feature type="strand" evidence="3">
    <location>
        <begin position="190"/>
        <end position="195"/>
    </location>
</feature>
<feature type="strand" evidence="3">
    <location>
        <begin position="198"/>
        <end position="200"/>
    </location>
</feature>
<feature type="helix" evidence="3">
    <location>
        <begin position="202"/>
        <end position="204"/>
    </location>
</feature>
<feature type="helix" evidence="3">
    <location>
        <begin position="212"/>
        <end position="215"/>
    </location>
</feature>
<feature type="turn" evidence="3">
    <location>
        <begin position="217"/>
        <end position="220"/>
    </location>
</feature>
<feature type="helix" evidence="3">
    <location>
        <begin position="229"/>
        <end position="236"/>
    </location>
</feature>
<feature type="helix" evidence="3">
    <location>
        <begin position="238"/>
        <end position="246"/>
    </location>
</feature>
<feature type="helix" evidence="3">
    <location>
        <begin position="251"/>
        <end position="265"/>
    </location>
</feature>
<feature type="strand" evidence="3">
    <location>
        <begin position="270"/>
        <end position="277"/>
    </location>
</feature>
<feature type="strand" evidence="3">
    <location>
        <begin position="289"/>
        <end position="297"/>
    </location>
</feature>
<feature type="strand" evidence="3">
    <location>
        <begin position="300"/>
        <end position="304"/>
    </location>
</feature>
<feature type="helix" evidence="3">
    <location>
        <begin position="311"/>
        <end position="328"/>
    </location>
</feature>
<organism>
    <name type="scientific">Cyprinus carpio</name>
    <name type="common">Common carp</name>
    <dbReference type="NCBI Taxonomy" id="7962"/>
    <lineage>
        <taxon>Eukaryota</taxon>
        <taxon>Metazoa</taxon>
        <taxon>Chordata</taxon>
        <taxon>Craniata</taxon>
        <taxon>Vertebrata</taxon>
        <taxon>Euteleostomi</taxon>
        <taxon>Actinopterygii</taxon>
        <taxon>Neopterygii</taxon>
        <taxon>Teleostei</taxon>
        <taxon>Ostariophysi</taxon>
        <taxon>Cypriniformes</taxon>
        <taxon>Cyprinidae</taxon>
        <taxon>Cyprininae</taxon>
        <taxon>Cyprinus</taxon>
    </lineage>
</organism>
<evidence type="ECO:0000250" key="1"/>
<evidence type="ECO:0000305" key="2"/>
<evidence type="ECO:0007829" key="3">
    <source>
        <dbReference type="PDB" id="1V6A"/>
    </source>
</evidence>
<keyword id="KW-0002">3D-structure</keyword>
<keyword id="KW-0963">Cytoplasm</keyword>
<keyword id="KW-0520">NAD</keyword>
<keyword id="KW-0560">Oxidoreductase</keyword>
<keyword id="KW-1185">Reference proteome</keyword>
<accession>Q9W7K5</accession>
<comment type="catalytic activity">
    <reaction>
        <text>(S)-lactate + NAD(+) = pyruvate + NADH + H(+)</text>
        <dbReference type="Rhea" id="RHEA:23444"/>
        <dbReference type="ChEBI" id="CHEBI:15361"/>
        <dbReference type="ChEBI" id="CHEBI:15378"/>
        <dbReference type="ChEBI" id="CHEBI:16651"/>
        <dbReference type="ChEBI" id="CHEBI:57540"/>
        <dbReference type="ChEBI" id="CHEBI:57945"/>
        <dbReference type="EC" id="1.1.1.27"/>
    </reaction>
</comment>
<comment type="pathway">
    <text>Fermentation; pyruvate fermentation to lactate; (S)-lactate from pyruvate: step 1/1.</text>
</comment>
<comment type="subunit">
    <text evidence="1">Homotetramer.</text>
</comment>
<comment type="subcellular location">
    <subcellularLocation>
        <location evidence="1">Cytoplasm</location>
    </subcellularLocation>
</comment>
<comment type="similarity">
    <text evidence="2">Belongs to the LDH/MDH superfamily. LDH family.</text>
</comment>
<protein>
    <recommendedName>
        <fullName>L-lactate dehydrogenase A chain</fullName>
        <shortName>LDH-A</shortName>
        <ecNumber>1.1.1.27</ecNumber>
    </recommendedName>
</protein>
<sequence length="333" mass="36277">MASTKEKLITHVSKEEPAGPTNKVTVVGVGMVGMAAAISILLKDLTDELALVDVMEDKLKGEAMDLQHGSLFLKTHKIVADKDYSVTANSKVVVVTAGARQQEGESRLNLVQRNVNIFKFIIPNIIKYSPNCILLVVSNPVDILTYVAWKLSGLPRNRVIGSGTNLDSARFRHLMGEKLGIHPSNCHGWVIGEHGDSSVPVWSGVNVAGVFLQGLNPDMGTDKDKEDWKSVHKMVVDSAYEVIKLKGYTSWAIGMSAADLCQSILKNLRKCHPVSTLVKGMHGVNEEVFLSVPCILGNSGLTDVVHMTLKSDEEKQLVKSAETLWGVQKDLTL</sequence>
<gene>
    <name type="primary">ldha</name>
</gene>
<reference key="1">
    <citation type="submission" date="1998-07" db="EMBL/GenBank/DDBJ databases">
        <title>Molecular evolution of vertebrate lactate dehydrogenase isozymes by gene duplication.</title>
        <authorList>
            <person name="Tsoi S.C.-M."/>
            <person name="Li J.Y."/>
            <person name="Mannen H."/>
            <person name="Li S.S.-L."/>
        </authorList>
    </citation>
    <scope>NUCLEOTIDE SEQUENCE [MRNA]</scope>
    <source>
        <tissue>Liver</tissue>
    </source>
</reference>
<proteinExistence type="evidence at protein level"/>